<feature type="chain" id="PRO_0000462020" description="Nucleoprotein">
    <location>
        <begin position="1"/>
        <end position="549"/>
    </location>
</feature>
<feature type="region of interest" description="Disordered" evidence="4">
    <location>
        <begin position="437"/>
        <end position="469"/>
    </location>
</feature>
<feature type="region of interest" description="Disordered" evidence="4">
    <location>
        <begin position="517"/>
        <end position="549"/>
    </location>
</feature>
<feature type="compositionally biased region" description="Acidic residues" evidence="4">
    <location>
        <begin position="437"/>
        <end position="447"/>
    </location>
</feature>
<feature type="compositionally biased region" description="Polar residues" evidence="4">
    <location>
        <begin position="531"/>
        <end position="549"/>
    </location>
</feature>
<feature type="modified residue" description="Phosphoserine" evidence="6">
    <location>
        <position position="439"/>
    </location>
</feature>
<feature type="mutagenesis site" description="90% reduced phosphorylation of NP." evidence="6">
    <original>S</original>
    <variation>A</variation>
    <location>
        <position position="439"/>
    </location>
</feature>
<gene>
    <name type="primary">N</name>
    <name type="synonym">NP</name>
</gene>
<organism>
    <name type="scientific">Mumps orthorubulavirus</name>
    <name type="common">MuV</name>
    <dbReference type="NCBI Taxonomy" id="2560602"/>
    <lineage>
        <taxon>Viruses</taxon>
        <taxon>Riboviria</taxon>
        <taxon>Orthornavirae</taxon>
        <taxon>Negarnaviricota</taxon>
        <taxon>Haploviricotina</taxon>
        <taxon>Monjiviricetes</taxon>
        <taxon>Mononegavirales</taxon>
        <taxon>Paramyxoviridae</taxon>
        <taxon>Rubulavirinae</taxon>
        <taxon>Orthorubulavirus</taxon>
        <taxon>Orthorubulavirus parotitidis</taxon>
    </lineage>
</organism>
<comment type="function">
    <text evidence="2 5">Forms the helical nucleocapsid (NC) with 12.71 N subunits per helical turn and a rise of 5.3 Angstrom per N subunit, protecting the genome from nucleases (PubMed:25288750). The encapsidated genomic RNA serves as template for transcription and replication; encapsidation by N is coupled to RNA synthesis (By similarity). Forms the encapsidation complex with the phosphoprotein protein P (PubMed:25288750). Before encapsidation, the newly synthesized free N protein, so-called N0, is chaperoned by P (By similarity).</text>
</comment>
<comment type="subunit">
    <text evidence="1 2 5">Homomultimer; forms the nucleocapsid (By similarity). Binds to the viral genomic RNA (By similarity). N0 interacts with the phosphoprotein (via N-terminus); this interaction allows P to chaperon N0 to avoid N polymerization before encapsidation (By similarity). Interacts (via N-terminus) as N-RNA template with the phosphoprotein (via C-terminus); this interaction positions the polymerase on the template (PubMed:25288750).</text>
</comment>
<comment type="subcellular location">
    <subcellularLocation>
        <location evidence="3">Virion</location>
    </subcellularLocation>
    <subcellularLocation>
        <location evidence="1">Host cytoplasm</location>
    </subcellularLocation>
    <text evidence="1">Found in cytoplasmic viral factories.</text>
</comment>
<comment type="domain">
    <text evidence="2">Ncore is globular and carries the regions required for self-assembly and RNA-binding. Ntail is an intrinsically disordered monomeric domain in the C-terminus.</text>
</comment>
<comment type="similarity">
    <text evidence="7">Belongs to the paramyxoviruses nucleocapsid family.</text>
</comment>
<keyword id="KW-0167">Capsid protein</keyword>
<keyword id="KW-1139">Helical capsid protein</keyword>
<keyword id="KW-1035">Host cytoplasm</keyword>
<keyword id="KW-0597">Phosphoprotein</keyword>
<keyword id="KW-0687">Ribonucleoprotein</keyword>
<keyword id="KW-0694">RNA-binding</keyword>
<keyword id="KW-0543">Viral nucleoprotein</keyword>
<keyword id="KW-0946">Virion</keyword>
<dbReference type="EMBL" id="AF280799">
    <property type="protein sequence ID" value="AAG37826.1"/>
    <property type="molecule type" value="Genomic_RNA"/>
</dbReference>
<dbReference type="EMBL" id="JN012242">
    <property type="protein sequence ID" value="AEI98825.1"/>
    <property type="molecule type" value="Viral_cRNA"/>
</dbReference>
<dbReference type="EMBL" id="JX287385">
    <property type="protein sequence ID" value="AFO62133.1"/>
    <property type="molecule type" value="Viral_cRNA"/>
</dbReference>
<dbReference type="EMBL" id="JX287387">
    <property type="protein sequence ID" value="AFO62151.1"/>
    <property type="molecule type" value="Viral_cRNA"/>
</dbReference>
<dbReference type="EMBL" id="JX287389">
    <property type="protein sequence ID" value="AFO62169.1"/>
    <property type="molecule type" value="Viral_cRNA"/>
</dbReference>
<dbReference type="EMBL" id="JX287390">
    <property type="protein sequence ID" value="AFO62178.1"/>
    <property type="molecule type" value="Viral_cRNA"/>
</dbReference>
<dbReference type="EMBL" id="JX287391">
    <property type="protein sequence ID" value="AFO62187.1"/>
    <property type="molecule type" value="Viral_cRNA"/>
</dbReference>
<dbReference type="SMR" id="Q9DQA5"/>
<dbReference type="Proteomes" id="UP000099984">
    <property type="component" value="Genome"/>
</dbReference>
<dbReference type="Proteomes" id="UP000108716">
    <property type="component" value="Genome"/>
</dbReference>
<dbReference type="Proteomes" id="UP000125075">
    <property type="component" value="Genome"/>
</dbReference>
<dbReference type="Proteomes" id="UP000141977">
    <property type="component" value="Genome"/>
</dbReference>
<dbReference type="Proteomes" id="UP000142179">
    <property type="component" value="Genome"/>
</dbReference>
<dbReference type="Proteomes" id="UP000160412">
    <property type="component" value="Genome"/>
</dbReference>
<dbReference type="Proteomes" id="UP000160417">
    <property type="component" value="Genome"/>
</dbReference>
<dbReference type="GO" id="GO:0019029">
    <property type="term" value="C:helical viral capsid"/>
    <property type="evidence" value="ECO:0007669"/>
    <property type="project" value="UniProtKB-KW"/>
</dbReference>
<dbReference type="GO" id="GO:0030430">
    <property type="term" value="C:host cell cytoplasm"/>
    <property type="evidence" value="ECO:0007669"/>
    <property type="project" value="UniProtKB-SubCell"/>
</dbReference>
<dbReference type="GO" id="GO:1990904">
    <property type="term" value="C:ribonucleoprotein complex"/>
    <property type="evidence" value="ECO:0007669"/>
    <property type="project" value="UniProtKB-KW"/>
</dbReference>
<dbReference type="GO" id="GO:0019013">
    <property type="term" value="C:viral nucleocapsid"/>
    <property type="evidence" value="ECO:0007669"/>
    <property type="project" value="UniProtKB-KW"/>
</dbReference>
<dbReference type="GO" id="GO:0003723">
    <property type="term" value="F:RNA binding"/>
    <property type="evidence" value="ECO:0007669"/>
    <property type="project" value="UniProtKB-KW"/>
</dbReference>
<dbReference type="GO" id="GO:0005198">
    <property type="term" value="F:structural molecule activity"/>
    <property type="evidence" value="ECO:0007669"/>
    <property type="project" value="InterPro"/>
</dbReference>
<dbReference type="GO" id="GO:0039689">
    <property type="term" value="P:negative stranded viral RNA replication"/>
    <property type="evidence" value="ECO:0000314"/>
    <property type="project" value="UniProtKB"/>
</dbReference>
<dbReference type="GO" id="GO:0039697">
    <property type="term" value="P:negative stranded viral RNA transcription"/>
    <property type="evidence" value="ECO:0000314"/>
    <property type="project" value="UniProtKB"/>
</dbReference>
<dbReference type="InterPro" id="IPR002021">
    <property type="entry name" value="Paramyx_ncap"/>
</dbReference>
<dbReference type="Pfam" id="PF00973">
    <property type="entry name" value="Paramyxo_ncap"/>
    <property type="match status" value="1"/>
</dbReference>
<evidence type="ECO:0000250" key="1">
    <source>
        <dbReference type="UniProtKB" id="D5LWW7"/>
    </source>
</evidence>
<evidence type="ECO:0000250" key="2">
    <source>
        <dbReference type="UniProtKB" id="P06159"/>
    </source>
</evidence>
<evidence type="ECO:0000250" key="3">
    <source>
        <dbReference type="UniProtKB" id="Q77IS8"/>
    </source>
</evidence>
<evidence type="ECO:0000256" key="4">
    <source>
        <dbReference type="SAM" id="MobiDB-lite"/>
    </source>
</evidence>
<evidence type="ECO:0000269" key="5">
    <source>
    </source>
</evidence>
<evidence type="ECO:0000269" key="6">
    <source>
    </source>
</evidence>
<evidence type="ECO:0000305" key="7"/>
<protein>
    <recommendedName>
        <fullName>Nucleoprotein</fullName>
    </recommendedName>
    <alternativeName>
        <fullName>Nucleocapsid protein</fullName>
        <shortName>NP</shortName>
        <shortName>Protein N</shortName>
    </alternativeName>
</protein>
<sequence>MSSVLKAFERFTIEQELQDRGEEGSIPPETLKSAVKVFVINTPNPTTRYQMLNFCLRIICSQNARASHRVGALITLFSLPSAGMQNHIRLADRSPEAQIERCEIDGFEPGTYRLIPNARANLTANEIAAYALLADDLPPTINNGTPYVHADVEGQPCDEIEQFLDRCYSVLIQAWVMVCKCMTAYDQPAGSADRRFAKYQQQGRLEARYMLQPEAQRLIQTAIRKSLVVRQYLTFELQLARRQGLLSNRYYAMVGDIGKYIENSGLTAFFLTLKYALGTKWSPLSLAAFTGELTKLRSLMMLYRDLGEQARYLALLEAPQIMDFAPGGYPLIFSYAMGVGTVLDVQMRNYTYARPFLNGYYFQIGVETARRQQGTVDNRVADDLGLTPEQRTEVTQLVDRLARGRGAGIPGGPVNPFVPPVQQQQPAAVYEDIPALEESDDDGDEDGGAGFQNGAQAPAVRQGGQNDFRAQPLQDPIQAQLFMPLYPQVSNIPNHQNHQINRIGGMEHQDLLRYNENGDSQQDARGEHGNTFPNNPNQNAQSQVGDWDE</sequence>
<name>NCAP_MUMPV</name>
<proteinExistence type="evidence at protein level"/>
<accession>Q9DQA5</accession>
<reference key="1">
    <citation type="journal article" date="2000" name="Virus Res.">
        <title>The genomic sequence of a contemporary wild-type mumps virus strain.</title>
        <authorList>
            <person name="Jin L."/>
            <person name="Beard S."/>
            <person name="Hale A."/>
            <person name="Knowles W."/>
            <person name="Brown D.W."/>
        </authorList>
    </citation>
    <scope>NUCLEOTIDE SEQUENCE [GENOMIC RNA]</scope>
    <source>
        <strain>Glouc1/UK96</strain>
    </source>
</reference>
<reference key="2">
    <citation type="journal article" date="2011" name="Virology">
        <title>Rescue of wild-type mumps virus from a strain associated with recent outbreaks helps to define the role of the SH ORF in the pathogenesis of mumps virus.</title>
        <authorList>
            <person name="Xu P."/>
            <person name="Li Z."/>
            <person name="Sun D."/>
            <person name="Lin Y."/>
            <person name="Wu J."/>
            <person name="Rota P.A."/>
            <person name="He B."/>
        </authorList>
    </citation>
    <scope>NUCLEOTIDE SEQUENCE [GENOMIC RNA]</scope>
    <source>
        <strain>MuV-IA</strain>
    </source>
</reference>
<reference key="3">
    <citation type="submission" date="2012-06" db="EMBL/GenBank/DDBJ databases">
        <authorList>
            <person name="Kirkness E.F."/>
            <person name="Halpin R."/>
            <person name="Bera J."/>
            <person name="Fedorova N."/>
            <person name="Overton L."/>
            <person name="Stockwell T."/>
            <person name="Amedeo P."/>
            <person name="Bishop B."/>
            <person name="Chen H."/>
            <person name="Edworthy P."/>
            <person name="Gupta N."/>
            <person name="Katzel D."/>
            <person name="Li K."/>
            <person name="Schobel S."/>
            <person name="Shrivastava S."/>
            <person name="Thovarai V."/>
            <person name="Wang S."/>
            <person name="Bankamp B."/>
            <person name="Lopareva E."/>
            <person name="Wentworth D.E."/>
            <person name="Bellini W."/>
            <person name="Rota P."/>
        </authorList>
    </citation>
    <scope>NUCLEOTIDE SEQUENCE [GENOMIC RNA]</scope>
    <source>
        <strain>MuV/Iowa.USA/06</strain>
        <strain>MuV/New York.USA/01.10</strain>
        <strain>MuV/New York.USA/40.09/1</strain>
        <strain>MuV/New York.USA/40.09/4</strain>
        <strain>MuV/New York.USA/53.09/3</strain>
    </source>
</reference>
<reference key="4">
    <citation type="journal article" date="2014" name="Proc. Natl. Acad. Sci. U.S.A.">
        <title>Structural studies on the authentic mumps virus nucleocapsid showing uncoiling by the phosphoprotein.</title>
        <authorList>
            <person name="Cox R."/>
            <person name="Pickar A."/>
            <person name="Qiu S."/>
            <person name="Tsao J."/>
            <person name="Rodenburg C."/>
            <person name="Dokland T."/>
            <person name="Elson A."/>
            <person name="He B."/>
            <person name="Luo M."/>
        </authorList>
    </citation>
    <scope>STRUCTURE BY ELECTRON MICROSCOPY (18.0 ANGSTROMS) OF THE NUCLEOCAPSID</scope>
    <scope>INTERACTION WITH THE PHOSPHOPROTEIN</scope>
    <scope>FUNCTION</scope>
    <source>
        <strain>MuV/Iowa.USA/06</strain>
    </source>
</reference>
<reference key="5">
    <citation type="journal article" date="2015" name="J. Virol.">
        <title>Roles of Phosphorylation of the Nucleocapsid Protein of Mumps Virus in Regulating Viral RNA Transcription and Replication.</title>
        <authorList>
            <person name="Zengel J."/>
            <person name="Pickar A."/>
            <person name="Xu P."/>
            <person name="Lin A."/>
            <person name="He B."/>
        </authorList>
    </citation>
    <scope>PHOSPHORYLATION AT SER-439</scope>
    <scope>MUTAGENESIS OF SER-439</scope>
</reference>